<accession>Q1RGK5</accession>
<comment type="function">
    <text evidence="1">Catalyzes the ferrous insertion into protoporphyrin IX.</text>
</comment>
<comment type="catalytic activity">
    <reaction evidence="1">
        <text>heme b + 2 H(+) = protoporphyrin IX + Fe(2+)</text>
        <dbReference type="Rhea" id="RHEA:22584"/>
        <dbReference type="ChEBI" id="CHEBI:15378"/>
        <dbReference type="ChEBI" id="CHEBI:29033"/>
        <dbReference type="ChEBI" id="CHEBI:57306"/>
        <dbReference type="ChEBI" id="CHEBI:60344"/>
        <dbReference type="EC" id="4.98.1.1"/>
    </reaction>
</comment>
<comment type="pathway">
    <text evidence="1">Porphyrin-containing compound metabolism; protoheme biosynthesis; protoheme from protoporphyrin-IX: step 1/1.</text>
</comment>
<comment type="subcellular location">
    <subcellularLocation>
        <location evidence="1">Cytoplasm</location>
    </subcellularLocation>
</comment>
<comment type="similarity">
    <text evidence="1">Belongs to the ferrochelatase family.</text>
</comment>
<evidence type="ECO:0000255" key="1">
    <source>
        <dbReference type="HAMAP-Rule" id="MF_00323"/>
    </source>
</evidence>
<keyword id="KW-0963">Cytoplasm</keyword>
<keyword id="KW-0350">Heme biosynthesis</keyword>
<keyword id="KW-0408">Iron</keyword>
<keyword id="KW-0456">Lyase</keyword>
<keyword id="KW-0479">Metal-binding</keyword>
<keyword id="KW-0627">Porphyrin biosynthesis</keyword>
<organism>
    <name type="scientific">Rickettsia bellii (strain RML369-C)</name>
    <dbReference type="NCBI Taxonomy" id="336407"/>
    <lineage>
        <taxon>Bacteria</taxon>
        <taxon>Pseudomonadati</taxon>
        <taxon>Pseudomonadota</taxon>
        <taxon>Alphaproteobacteria</taxon>
        <taxon>Rickettsiales</taxon>
        <taxon>Rickettsiaceae</taxon>
        <taxon>Rickettsieae</taxon>
        <taxon>Rickettsia</taxon>
        <taxon>belli group</taxon>
    </lineage>
</organism>
<proteinExistence type="inferred from homology"/>
<feature type="chain" id="PRO_0000277996" description="Ferrochelatase">
    <location>
        <begin position="1"/>
        <end position="354"/>
    </location>
</feature>
<feature type="binding site" evidence="1">
    <location>
        <position position="191"/>
    </location>
    <ligand>
        <name>Fe cation</name>
        <dbReference type="ChEBI" id="CHEBI:24875"/>
    </ligand>
</feature>
<feature type="binding site" evidence="1">
    <location>
        <position position="271"/>
    </location>
    <ligand>
        <name>Fe cation</name>
        <dbReference type="ChEBI" id="CHEBI:24875"/>
    </ligand>
</feature>
<sequence>MNINKKRIAIVLFNLGGPDSLKSVKPFLFNLFYDKAIINLPNPLRYIIAKLISTTREKKSQKIYSLIGGKSPLLEETEKQKLALAENLKQATNEDFNIFINMRYASPKIEETIKQIKEYNPTEVILLPLYPQFSTTTTGSSVKNFLSNFNINIPVKVVCCYPVEENFIKAHTALIKEKIFDKNSRVLFSAHGLPQKIIDAGDPYSFQVEETVKAVVKELNIKDLDYKVTYQSRVGPVEWLKPNTEDEIEIAGKQNKNIIIVPIAFVSEHVETLVELDIEYKLIADKYKIKYNRTPTLSTNKIFIKSLTSILLKFINKKEDDFLVASSNGERICPDKFSKCLCFTSFPPMRESSK</sequence>
<name>HEMH_RICBR</name>
<protein>
    <recommendedName>
        <fullName evidence="1">Ferrochelatase</fullName>
        <ecNumber evidence="1">4.98.1.1</ecNumber>
    </recommendedName>
    <alternativeName>
        <fullName evidence="1">Heme synthase</fullName>
    </alternativeName>
    <alternativeName>
        <fullName evidence="1">Protoheme ferro-lyase</fullName>
    </alternativeName>
</protein>
<dbReference type="EC" id="4.98.1.1" evidence="1"/>
<dbReference type="EMBL" id="CP000087">
    <property type="protein sequence ID" value="ABE05509.1"/>
    <property type="molecule type" value="Genomic_DNA"/>
</dbReference>
<dbReference type="RefSeq" id="WP_011478078.1">
    <property type="nucleotide sequence ID" value="NC_007940.1"/>
</dbReference>
<dbReference type="SMR" id="Q1RGK5"/>
<dbReference type="KEGG" id="rbe:RBE_1428"/>
<dbReference type="eggNOG" id="COG0276">
    <property type="taxonomic scope" value="Bacteria"/>
</dbReference>
<dbReference type="HOGENOM" id="CLU_018884_4_1_5"/>
<dbReference type="OrthoDB" id="9809741at2"/>
<dbReference type="UniPathway" id="UPA00252">
    <property type="reaction ID" value="UER00325"/>
</dbReference>
<dbReference type="Proteomes" id="UP000001951">
    <property type="component" value="Chromosome"/>
</dbReference>
<dbReference type="GO" id="GO:0005737">
    <property type="term" value="C:cytoplasm"/>
    <property type="evidence" value="ECO:0007669"/>
    <property type="project" value="UniProtKB-SubCell"/>
</dbReference>
<dbReference type="GO" id="GO:0004325">
    <property type="term" value="F:ferrochelatase activity"/>
    <property type="evidence" value="ECO:0007669"/>
    <property type="project" value="UniProtKB-UniRule"/>
</dbReference>
<dbReference type="GO" id="GO:0046872">
    <property type="term" value="F:metal ion binding"/>
    <property type="evidence" value="ECO:0007669"/>
    <property type="project" value="UniProtKB-KW"/>
</dbReference>
<dbReference type="GO" id="GO:0006783">
    <property type="term" value="P:heme biosynthetic process"/>
    <property type="evidence" value="ECO:0007669"/>
    <property type="project" value="UniProtKB-UniRule"/>
</dbReference>
<dbReference type="CDD" id="cd00419">
    <property type="entry name" value="Ferrochelatase_C"/>
    <property type="match status" value="1"/>
</dbReference>
<dbReference type="CDD" id="cd03411">
    <property type="entry name" value="Ferrochelatase_N"/>
    <property type="match status" value="1"/>
</dbReference>
<dbReference type="Gene3D" id="3.40.50.1400">
    <property type="match status" value="2"/>
</dbReference>
<dbReference type="HAMAP" id="MF_00323">
    <property type="entry name" value="Ferrochelatase"/>
    <property type="match status" value="1"/>
</dbReference>
<dbReference type="InterPro" id="IPR001015">
    <property type="entry name" value="Ferrochelatase"/>
</dbReference>
<dbReference type="InterPro" id="IPR019772">
    <property type="entry name" value="Ferrochelatase_AS"/>
</dbReference>
<dbReference type="InterPro" id="IPR033644">
    <property type="entry name" value="Ferrochelatase_C"/>
</dbReference>
<dbReference type="InterPro" id="IPR033659">
    <property type="entry name" value="Ferrochelatase_N"/>
</dbReference>
<dbReference type="NCBIfam" id="TIGR00109">
    <property type="entry name" value="hemH"/>
    <property type="match status" value="1"/>
</dbReference>
<dbReference type="PANTHER" id="PTHR11108">
    <property type="entry name" value="FERROCHELATASE"/>
    <property type="match status" value="1"/>
</dbReference>
<dbReference type="PANTHER" id="PTHR11108:SF1">
    <property type="entry name" value="FERROCHELATASE, MITOCHONDRIAL"/>
    <property type="match status" value="1"/>
</dbReference>
<dbReference type="Pfam" id="PF00762">
    <property type="entry name" value="Ferrochelatase"/>
    <property type="match status" value="1"/>
</dbReference>
<dbReference type="SUPFAM" id="SSF53800">
    <property type="entry name" value="Chelatase"/>
    <property type="match status" value="1"/>
</dbReference>
<dbReference type="PROSITE" id="PS00534">
    <property type="entry name" value="FERROCHELATASE"/>
    <property type="match status" value="1"/>
</dbReference>
<gene>
    <name evidence="1" type="primary">hemH</name>
    <name type="ordered locus">RBE_1428</name>
</gene>
<reference key="1">
    <citation type="journal article" date="2006" name="PLoS Genet.">
        <title>Genome sequence of Rickettsia bellii illuminates the role of amoebae in gene exchanges between intracellular pathogens.</title>
        <authorList>
            <person name="Ogata H."/>
            <person name="La Scola B."/>
            <person name="Audic S."/>
            <person name="Renesto P."/>
            <person name="Blanc G."/>
            <person name="Robert C."/>
            <person name="Fournier P.-E."/>
            <person name="Claverie J.-M."/>
            <person name="Raoult D."/>
        </authorList>
    </citation>
    <scope>NUCLEOTIDE SEQUENCE [LARGE SCALE GENOMIC DNA]</scope>
    <source>
        <strain>RML369-C</strain>
    </source>
</reference>